<organism>
    <name type="scientific">Saccharomyces cerevisiae (strain ATCC 204508 / S288c)</name>
    <name type="common">Baker's yeast</name>
    <dbReference type="NCBI Taxonomy" id="559292"/>
    <lineage>
        <taxon>Eukaryota</taxon>
        <taxon>Fungi</taxon>
        <taxon>Dikarya</taxon>
        <taxon>Ascomycota</taxon>
        <taxon>Saccharomycotina</taxon>
        <taxon>Saccharomycetes</taxon>
        <taxon>Saccharomycetales</taxon>
        <taxon>Saccharomycetaceae</taxon>
        <taxon>Saccharomyces</taxon>
    </lineage>
</organism>
<sequence length="185" mass="20648">MSKFSLKLGSKTLKKNISKKTKKKNSLQKANLFDWDDAETASLSHKPQSKIKIQSIDKFDLDEESSSKKKLVIKLSENADTKKNDAPLVEYVTEKEYNEVPVEEFGDALLRGMGWESDSEQDSKGDKTQSRNKDVSNVSQIHPDGLGIGAKLNKAINVEEASFMPVVKIDKITGTKVDDDKKNKS</sequence>
<name>SPP2_YEAST</name>
<gene>
    <name type="primary">SPP2</name>
    <name type="ordered locus">YOR148C</name>
</gene>
<evidence type="ECO:0000256" key="1">
    <source>
        <dbReference type="SAM" id="MobiDB-lite"/>
    </source>
</evidence>
<evidence type="ECO:0000269" key="2">
    <source>
    </source>
</evidence>
<evidence type="ECO:0000269" key="3">
    <source>
    </source>
</evidence>
<evidence type="ECO:0000269" key="4">
    <source>
    </source>
</evidence>
<evidence type="ECO:0000269" key="5">
    <source>
    </source>
</evidence>
<evidence type="ECO:0000269" key="6">
    <source>
    </source>
</evidence>
<evidence type="ECO:0000305" key="7"/>
<evidence type="ECO:0007829" key="8">
    <source>
        <dbReference type="PDB" id="7DCP"/>
    </source>
</evidence>
<evidence type="ECO:0007829" key="9">
    <source>
        <dbReference type="PDB" id="7DCR"/>
    </source>
</evidence>
<evidence type="ECO:0007829" key="10">
    <source>
        <dbReference type="PDB" id="7DD3"/>
    </source>
</evidence>
<keyword id="KW-0002">3D-structure</keyword>
<keyword id="KW-0963">Cytoplasm</keyword>
<keyword id="KW-0507">mRNA processing</keyword>
<keyword id="KW-0508">mRNA splicing</keyword>
<keyword id="KW-0539">Nucleus</keyword>
<keyword id="KW-1185">Reference proteome</keyword>
<keyword id="KW-0747">Spliceosome</keyword>
<comment type="function">
    <text evidence="6">Involved in pre-mRNA splicing; specifically in the final stages of spliceosome maturation. Promotes the first step of splicing.</text>
</comment>
<comment type="subunit">
    <text evidence="2 5 6">Belongs to the CWC complex (or CEF1-associated complex), a spliceosome sub-complex reminiscent of a late-stage spliceosome composed of the U2, U5 and U6 snRNAs and at least BUD13, BUD31, BRR2, CDC40, CEF1, CLF1, CUS1, CWC2, CWC15, CWC21, CWC22, CWC23, CWC24, CWC25, CWC27, ECM2, HSH155, IST3, ISY1, LEA1, MSL1, NTC20, PRP8, PRP9, PRP11, PRP19, PRP21, PRP22, PRP45, PRP46, SLU7, SMB1, SMD1, SMD2, SMD3, SMX2, SMX3, SNT309, SNU114, SPP2, SYF1, SYF2, RSE1 and YJU2. Interacts with PRP2.</text>
</comment>
<comment type="subcellular location">
    <subcellularLocation>
        <location evidence="3">Cytoplasm</location>
    </subcellularLocation>
    <subcellularLocation>
        <location evidence="3">Nucleus</location>
    </subcellularLocation>
</comment>
<comment type="miscellaneous">
    <text evidence="4">Present with 752 molecules/cell in log phase SD medium.</text>
</comment>
<comment type="similarity">
    <text evidence="7">Belongs to the SPP2 family.</text>
</comment>
<protein>
    <recommendedName>
        <fullName>Pre-mRNA-splicing factor SPP2</fullName>
    </recommendedName>
    <alternativeName>
        <fullName>Spliceosome maturation protein SPP2</fullName>
    </alternativeName>
    <alternativeName>
        <fullName>Suppressor of PRP protein 2</fullName>
    </alternativeName>
</protein>
<accession>Q02521</accession>
<accession>D6W2K5</accession>
<accession>Q12353</accession>
<dbReference type="EMBL" id="U20613">
    <property type="protein sequence ID" value="AAA62318.1"/>
    <property type="molecule type" value="Genomic_DNA"/>
</dbReference>
<dbReference type="EMBL" id="U55020">
    <property type="protein sequence ID" value="AAC49634.1"/>
    <property type="molecule type" value="Genomic_DNA"/>
</dbReference>
<dbReference type="EMBL" id="Z75056">
    <property type="protein sequence ID" value="CAA99354.1"/>
    <property type="molecule type" value="Genomic_DNA"/>
</dbReference>
<dbReference type="EMBL" id="BK006948">
    <property type="protein sequence ID" value="DAA10921.1"/>
    <property type="molecule type" value="Genomic_DNA"/>
</dbReference>
<dbReference type="PIR" id="S67036">
    <property type="entry name" value="S67036"/>
</dbReference>
<dbReference type="RefSeq" id="NP_014791.1">
    <property type="nucleotide sequence ID" value="NM_001183567.1"/>
</dbReference>
<dbReference type="PDB" id="7DCO">
    <property type="method" value="EM"/>
    <property type="resolution" value="2.50 A"/>
    <property type="chains" value="y=1-185"/>
</dbReference>
<dbReference type="PDB" id="7DCP">
    <property type="method" value="EM"/>
    <property type="resolution" value="3.15 A"/>
    <property type="chains" value="y=1-185"/>
</dbReference>
<dbReference type="PDB" id="7DCR">
    <property type="method" value="EM"/>
    <property type="resolution" value="3.15 A"/>
    <property type="chains" value="y=1-185"/>
</dbReference>
<dbReference type="PDB" id="7DD3">
    <property type="method" value="EM"/>
    <property type="resolution" value="3.20 A"/>
    <property type="chains" value="y=1-185"/>
</dbReference>
<dbReference type="PDBsum" id="7DCO"/>
<dbReference type="PDBsum" id="7DCP"/>
<dbReference type="PDBsum" id="7DCR"/>
<dbReference type="PDBsum" id="7DD3"/>
<dbReference type="EMDB" id="EMD-30637"/>
<dbReference type="SMR" id="Q02521"/>
<dbReference type="BioGRID" id="34544">
    <property type="interactions" value="28"/>
</dbReference>
<dbReference type="ComplexPortal" id="CPX-1651">
    <property type="entry name" value="PRP19-associated complex"/>
</dbReference>
<dbReference type="DIP" id="DIP-4140N"/>
<dbReference type="FunCoup" id="Q02521">
    <property type="interactions" value="103"/>
</dbReference>
<dbReference type="IntAct" id="Q02521">
    <property type="interactions" value="15"/>
</dbReference>
<dbReference type="MINT" id="Q02521"/>
<dbReference type="STRING" id="4932.YOR148C"/>
<dbReference type="iPTMnet" id="Q02521"/>
<dbReference type="PaxDb" id="4932-YOR148C"/>
<dbReference type="PeptideAtlas" id="Q02521"/>
<dbReference type="PRIDE" id="Q02521"/>
<dbReference type="EnsemblFungi" id="YOR148C_mRNA">
    <property type="protein sequence ID" value="YOR148C"/>
    <property type="gene ID" value="YOR148C"/>
</dbReference>
<dbReference type="GeneID" id="854319"/>
<dbReference type="KEGG" id="sce:YOR148C"/>
<dbReference type="AGR" id="SGD:S000005674"/>
<dbReference type="SGD" id="S000005674">
    <property type="gene designation" value="SPP2"/>
</dbReference>
<dbReference type="VEuPathDB" id="FungiDB:YOR148C"/>
<dbReference type="eggNOG" id="ENOG502S8BR">
    <property type="taxonomic scope" value="Eukaryota"/>
</dbReference>
<dbReference type="GeneTree" id="ENSGT00390000015154"/>
<dbReference type="HOGENOM" id="CLU_110336_0_0_1"/>
<dbReference type="InParanoid" id="Q02521"/>
<dbReference type="OMA" id="SKIRITH"/>
<dbReference type="OrthoDB" id="5577072at2759"/>
<dbReference type="BioCyc" id="YEAST:G3O-33666-MONOMER"/>
<dbReference type="BioGRID-ORCS" id="854319">
    <property type="hits" value="0 hits in 10 CRISPR screens"/>
</dbReference>
<dbReference type="PRO" id="PR:Q02521"/>
<dbReference type="Proteomes" id="UP000002311">
    <property type="component" value="Chromosome XV"/>
</dbReference>
<dbReference type="RNAct" id="Q02521">
    <property type="molecule type" value="protein"/>
</dbReference>
<dbReference type="GO" id="GO:0005737">
    <property type="term" value="C:cytoplasm"/>
    <property type="evidence" value="ECO:0007669"/>
    <property type="project" value="UniProtKB-SubCell"/>
</dbReference>
<dbReference type="GO" id="GO:0000974">
    <property type="term" value="C:Prp19 complex"/>
    <property type="evidence" value="ECO:0000353"/>
    <property type="project" value="ComplexPortal"/>
</dbReference>
<dbReference type="GO" id="GO:0005681">
    <property type="term" value="C:spliceosomal complex"/>
    <property type="evidence" value="ECO:0000314"/>
    <property type="project" value="SGD"/>
</dbReference>
<dbReference type="GO" id="GO:0001671">
    <property type="term" value="F:ATPase activator activity"/>
    <property type="evidence" value="ECO:0000314"/>
    <property type="project" value="SGD"/>
</dbReference>
<dbReference type="GO" id="GO:0003676">
    <property type="term" value="F:nucleic acid binding"/>
    <property type="evidence" value="ECO:0007669"/>
    <property type="project" value="InterPro"/>
</dbReference>
<dbReference type="GO" id="GO:0000398">
    <property type="term" value="P:mRNA splicing, via spliceosome"/>
    <property type="evidence" value="ECO:0000315"/>
    <property type="project" value="SGD"/>
</dbReference>
<dbReference type="DisProt" id="DP02917"/>
<dbReference type="InterPro" id="IPR000467">
    <property type="entry name" value="G_patch_dom"/>
</dbReference>
<dbReference type="InterPro" id="IPR045166">
    <property type="entry name" value="Spp2-like"/>
</dbReference>
<dbReference type="InterPro" id="IPR026822">
    <property type="entry name" value="Spp2/MOS2_G-patch"/>
</dbReference>
<dbReference type="PANTHER" id="PTHR15818">
    <property type="entry name" value="G PATCH AND KOW-CONTAINING"/>
    <property type="match status" value="1"/>
</dbReference>
<dbReference type="PANTHER" id="PTHR15818:SF2">
    <property type="entry name" value="G-PATCH DOMAIN AND KOW MOTIFS-CONTAINING PROTEIN"/>
    <property type="match status" value="1"/>
</dbReference>
<dbReference type="Pfam" id="PF12656">
    <property type="entry name" value="G-patch_2"/>
    <property type="match status" value="1"/>
</dbReference>
<dbReference type="SMART" id="SM00443">
    <property type="entry name" value="G_patch"/>
    <property type="match status" value="1"/>
</dbReference>
<feature type="chain" id="PRO_0000218529" description="Pre-mRNA-splicing factor SPP2">
    <location>
        <begin position="1"/>
        <end position="185"/>
    </location>
</feature>
<feature type="domain" description="G-patch">
    <location>
        <begin position="100"/>
        <end position="149"/>
    </location>
</feature>
<feature type="region of interest" description="Disordered" evidence="1">
    <location>
        <begin position="112"/>
        <end position="143"/>
    </location>
</feature>
<feature type="compositionally biased region" description="Basic and acidic residues" evidence="1">
    <location>
        <begin position="121"/>
        <end position="134"/>
    </location>
</feature>
<feature type="mutagenesis site" description="Loss of the interaction with PRP2." evidence="5">
    <original>L</original>
    <variation>E</variation>
    <variation>R</variation>
    <location>
        <position position="109"/>
    </location>
</feature>
<feature type="mutagenesis site" description="Restores interactions with PRP2 mutants." evidence="5">
    <original>L</original>
    <variation>V</variation>
    <location>
        <position position="109"/>
    </location>
</feature>
<feature type="sequence conflict" description="In Ref. 1; AAA62318." evidence="7" ref="1">
    <original>KK</original>
    <variation>GG</variation>
    <location>
        <begin position="68"/>
        <end position="69"/>
    </location>
</feature>
<feature type="sequence conflict" description="In Ref. 1; AAA62318." evidence="7" ref="1">
    <original>P</original>
    <variation>L</variation>
    <location>
        <position position="143"/>
    </location>
</feature>
<feature type="sequence conflict" description="In Ref. 1; AAA62318." evidence="7" ref="1">
    <original>G</original>
    <variation>V</variation>
    <location>
        <position position="149"/>
    </location>
</feature>
<feature type="helix" evidence="10">
    <location>
        <begin position="10"/>
        <end position="13"/>
    </location>
</feature>
<feature type="helix" evidence="8">
    <location>
        <begin position="96"/>
        <end position="99"/>
    </location>
</feature>
<feature type="helix" evidence="8">
    <location>
        <begin position="102"/>
        <end position="113"/>
    </location>
</feature>
<feature type="strand" evidence="9">
    <location>
        <begin position="144"/>
        <end position="146"/>
    </location>
</feature>
<proteinExistence type="evidence at protein level"/>
<reference key="1">
    <citation type="journal article" date="1995" name="RNA">
        <title>The final stages of spliceosome maturation require Spp2p that can interact with the DEAH box protein Prp2p and promote step 1 of splicing.</title>
        <authorList>
            <person name="Roy J."/>
            <person name="Kim K."/>
            <person name="Maddock J.R."/>
            <person name="Anthony J.G."/>
            <person name="Woolford J.L. Jr."/>
        </authorList>
    </citation>
    <scope>NUCLEOTIDE SEQUENCE [GENOMIC DNA]</scope>
    <scope>FUNCTION</scope>
    <scope>INTERACTION WITH PRP2</scope>
</reference>
<reference key="2">
    <citation type="journal article" date="1997" name="Yeast">
        <title>Analysis of a 35.6 kb region on the right arm of Saccharomyces cerevisiae chromosome XV.</title>
        <authorList>
            <person name="Bordonne R."/>
            <person name="Camasses A."/>
            <person name="Madania A."/>
            <person name="Poch O."/>
            <person name="Tarassov I.A."/>
            <person name="Winsor B."/>
            <person name="Martin R.P."/>
        </authorList>
    </citation>
    <scope>NUCLEOTIDE SEQUENCE [GENOMIC DNA]</scope>
    <source>
        <strain>S288c / FY1678</strain>
    </source>
</reference>
<reference key="3">
    <citation type="journal article" date="1997" name="Nature">
        <title>The nucleotide sequence of Saccharomyces cerevisiae chromosome XV.</title>
        <authorList>
            <person name="Dujon B."/>
            <person name="Albermann K."/>
            <person name="Aldea M."/>
            <person name="Alexandraki D."/>
            <person name="Ansorge W."/>
            <person name="Arino J."/>
            <person name="Benes V."/>
            <person name="Bohn C."/>
            <person name="Bolotin-Fukuhara M."/>
            <person name="Bordonne R."/>
            <person name="Boyer J."/>
            <person name="Camasses A."/>
            <person name="Casamayor A."/>
            <person name="Casas C."/>
            <person name="Cheret G."/>
            <person name="Cziepluch C."/>
            <person name="Daignan-Fornier B."/>
            <person name="Dang V.-D."/>
            <person name="de Haan M."/>
            <person name="Delius H."/>
            <person name="Durand P."/>
            <person name="Fairhead C."/>
            <person name="Feldmann H."/>
            <person name="Gaillon L."/>
            <person name="Galisson F."/>
            <person name="Gamo F.-J."/>
            <person name="Gancedo C."/>
            <person name="Goffeau A."/>
            <person name="Goulding S.E."/>
            <person name="Grivell L.A."/>
            <person name="Habbig B."/>
            <person name="Hand N.J."/>
            <person name="Hani J."/>
            <person name="Hattenhorst U."/>
            <person name="Hebling U."/>
            <person name="Hernando Y."/>
            <person name="Herrero E."/>
            <person name="Heumann K."/>
            <person name="Hiesel R."/>
            <person name="Hilger F."/>
            <person name="Hofmann B."/>
            <person name="Hollenberg C.P."/>
            <person name="Hughes B."/>
            <person name="Jauniaux J.-C."/>
            <person name="Kalogeropoulos A."/>
            <person name="Katsoulou C."/>
            <person name="Kordes E."/>
            <person name="Lafuente M.J."/>
            <person name="Landt O."/>
            <person name="Louis E.J."/>
            <person name="Maarse A.C."/>
            <person name="Madania A."/>
            <person name="Mannhaupt G."/>
            <person name="Marck C."/>
            <person name="Martin R.P."/>
            <person name="Mewes H.-W."/>
            <person name="Michaux G."/>
            <person name="Paces V."/>
            <person name="Parle-McDermott A.G."/>
            <person name="Pearson B.M."/>
            <person name="Perrin A."/>
            <person name="Pettersson B."/>
            <person name="Poch O."/>
            <person name="Pohl T.M."/>
            <person name="Poirey R."/>
            <person name="Portetelle D."/>
            <person name="Pujol A."/>
            <person name="Purnelle B."/>
            <person name="Ramezani Rad M."/>
            <person name="Rechmann S."/>
            <person name="Schwager C."/>
            <person name="Schweizer M."/>
            <person name="Sor F."/>
            <person name="Sterky F."/>
            <person name="Tarassov I.A."/>
            <person name="Teodoru C."/>
            <person name="Tettelin H."/>
            <person name="Thierry A."/>
            <person name="Tobiasch E."/>
            <person name="Tzermia M."/>
            <person name="Uhlen M."/>
            <person name="Unseld M."/>
            <person name="Valens M."/>
            <person name="Vandenbol M."/>
            <person name="Vetter I."/>
            <person name="Vlcek C."/>
            <person name="Voet M."/>
            <person name="Volckaert G."/>
            <person name="Voss H."/>
            <person name="Wambutt R."/>
            <person name="Wedler H."/>
            <person name="Wiemann S."/>
            <person name="Winsor B."/>
            <person name="Wolfe K.H."/>
            <person name="Zollner A."/>
            <person name="Zumstein E."/>
            <person name="Kleine K."/>
        </authorList>
    </citation>
    <scope>NUCLEOTIDE SEQUENCE [LARGE SCALE GENOMIC DNA]</scope>
    <source>
        <strain>ATCC 204508 / S288c</strain>
    </source>
</reference>
<reference key="4">
    <citation type="journal article" date="2014" name="G3 (Bethesda)">
        <title>The reference genome sequence of Saccharomyces cerevisiae: Then and now.</title>
        <authorList>
            <person name="Engel S.R."/>
            <person name="Dietrich F.S."/>
            <person name="Fisk D.G."/>
            <person name="Binkley G."/>
            <person name="Balakrishnan R."/>
            <person name="Costanzo M.C."/>
            <person name="Dwight S.S."/>
            <person name="Hitz B.C."/>
            <person name="Karra K."/>
            <person name="Nash R.S."/>
            <person name="Weng S."/>
            <person name="Wong E.D."/>
            <person name="Lloyd P."/>
            <person name="Skrzypek M.S."/>
            <person name="Miyasato S.R."/>
            <person name="Simison M."/>
            <person name="Cherry J.M."/>
        </authorList>
    </citation>
    <scope>GENOME REANNOTATION</scope>
    <source>
        <strain>ATCC 204508 / S288c</strain>
    </source>
</reference>
<reference key="5">
    <citation type="journal article" date="2002" name="Mol. Cell. Biol.">
        <title>Proteomics analysis reveals stable multiprotein complexes in both fission and budding yeasts containing Myb-related Cdc5p/Cef1p, novel pre-mRNA splicing factors, and snRNAs.</title>
        <authorList>
            <person name="Ohi M.D."/>
            <person name="Link A.J."/>
            <person name="Ren L."/>
            <person name="Jennings J.L."/>
            <person name="McDonald W.H."/>
            <person name="Gould K.L."/>
        </authorList>
    </citation>
    <scope>IDENTIFICATION IN THE CWC COMPLEX</scope>
    <scope>IDENTIFICATION BY MASS SPECTROMETRY</scope>
</reference>
<reference key="6">
    <citation type="journal article" date="2003" name="Nature">
        <title>Global analysis of protein localization in budding yeast.</title>
        <authorList>
            <person name="Huh W.-K."/>
            <person name="Falvo J.V."/>
            <person name="Gerke L.C."/>
            <person name="Carroll A.S."/>
            <person name="Howson R.W."/>
            <person name="Weissman J.S."/>
            <person name="O'Shea E.K."/>
        </authorList>
    </citation>
    <scope>SUBCELLULAR LOCATION [LARGE SCALE ANALYSIS]</scope>
</reference>
<reference key="7">
    <citation type="journal article" date="2003" name="Nature">
        <title>Global analysis of protein expression in yeast.</title>
        <authorList>
            <person name="Ghaemmaghami S."/>
            <person name="Huh W.-K."/>
            <person name="Bower K."/>
            <person name="Howson R.W."/>
            <person name="Belle A."/>
            <person name="Dephoure N."/>
            <person name="O'Shea E.K."/>
            <person name="Weissman J.S."/>
        </authorList>
    </citation>
    <scope>LEVEL OF PROTEIN EXPRESSION [LARGE SCALE ANALYSIS]</scope>
</reference>
<reference key="8">
    <citation type="journal article" date="2004" name="Mol. Cell. Biol.">
        <title>Interaction between a G-patch protein and a spliceosomal DEXD/H-box ATPase that is critical for splicing.</title>
        <authorList>
            <person name="Silverman E.J."/>
            <person name="Maeda A."/>
            <person name="Wei J."/>
            <person name="Smith P."/>
            <person name="Beggs J.D."/>
            <person name="Lin R.-J."/>
        </authorList>
    </citation>
    <scope>INTERACTION WITH PRP2</scope>
    <scope>MUTAGENESIS OF LEU-109</scope>
</reference>
<reference key="9">
    <citation type="journal article" date="2008" name="Mol. Cell. Proteomics">
        <title>A multidimensional chromatography technology for in-depth phosphoproteome analysis.</title>
        <authorList>
            <person name="Albuquerque C.P."/>
            <person name="Smolka M.B."/>
            <person name="Payne S.H."/>
            <person name="Bafna V."/>
            <person name="Eng J."/>
            <person name="Zhou H."/>
        </authorList>
    </citation>
    <scope>IDENTIFICATION BY MASS SPECTROMETRY [LARGE SCALE ANALYSIS]</scope>
</reference>
<reference key="10">
    <citation type="journal article" date="2009" name="Science">
        <title>Global analysis of Cdk1 substrate phosphorylation sites provides insights into evolution.</title>
        <authorList>
            <person name="Holt L.J."/>
            <person name="Tuch B.B."/>
            <person name="Villen J."/>
            <person name="Johnson A.D."/>
            <person name="Gygi S.P."/>
            <person name="Morgan D.O."/>
        </authorList>
    </citation>
    <scope>IDENTIFICATION BY MASS SPECTROMETRY [LARGE SCALE ANALYSIS]</scope>
</reference>